<accession>Q5M083</accession>
<evidence type="ECO:0000255" key="1">
    <source>
        <dbReference type="HAMAP-Rule" id="MF_01543"/>
    </source>
</evidence>
<proteinExistence type="inferred from homology"/>
<dbReference type="EC" id="6.3.4.3" evidence="1"/>
<dbReference type="EMBL" id="CP000024">
    <property type="protein sequence ID" value="AAV62384.1"/>
    <property type="molecule type" value="Genomic_DNA"/>
</dbReference>
<dbReference type="RefSeq" id="WP_011227107.1">
    <property type="nucleotide sequence ID" value="NC_006449.1"/>
</dbReference>
<dbReference type="SMR" id="Q5M083"/>
<dbReference type="KEGG" id="stc:str0791"/>
<dbReference type="HOGENOM" id="CLU_003601_3_3_9"/>
<dbReference type="UniPathway" id="UPA00193"/>
<dbReference type="GO" id="GO:0005524">
    <property type="term" value="F:ATP binding"/>
    <property type="evidence" value="ECO:0007669"/>
    <property type="project" value="UniProtKB-UniRule"/>
</dbReference>
<dbReference type="GO" id="GO:0004329">
    <property type="term" value="F:formate-tetrahydrofolate ligase activity"/>
    <property type="evidence" value="ECO:0007669"/>
    <property type="project" value="UniProtKB-UniRule"/>
</dbReference>
<dbReference type="GO" id="GO:0035999">
    <property type="term" value="P:tetrahydrofolate interconversion"/>
    <property type="evidence" value="ECO:0007669"/>
    <property type="project" value="UniProtKB-UniRule"/>
</dbReference>
<dbReference type="CDD" id="cd00477">
    <property type="entry name" value="FTHFS"/>
    <property type="match status" value="1"/>
</dbReference>
<dbReference type="FunFam" id="3.30.1510.10:FF:000001">
    <property type="entry name" value="Formate--tetrahydrofolate ligase"/>
    <property type="match status" value="1"/>
</dbReference>
<dbReference type="FunFam" id="3.10.410.10:FF:000001">
    <property type="entry name" value="Putative formate--tetrahydrofolate ligase"/>
    <property type="match status" value="1"/>
</dbReference>
<dbReference type="Gene3D" id="3.30.1510.10">
    <property type="entry name" value="Domain 2, N(10)-formyltetrahydrofolate synthetase"/>
    <property type="match status" value="1"/>
</dbReference>
<dbReference type="Gene3D" id="3.10.410.10">
    <property type="entry name" value="Formyltetrahydrofolate synthetase, domain 3"/>
    <property type="match status" value="1"/>
</dbReference>
<dbReference type="Gene3D" id="3.40.50.300">
    <property type="entry name" value="P-loop containing nucleotide triphosphate hydrolases"/>
    <property type="match status" value="1"/>
</dbReference>
<dbReference type="HAMAP" id="MF_01543">
    <property type="entry name" value="FTHFS"/>
    <property type="match status" value="1"/>
</dbReference>
<dbReference type="InterPro" id="IPR000559">
    <property type="entry name" value="Formate_THF_ligase"/>
</dbReference>
<dbReference type="InterPro" id="IPR020628">
    <property type="entry name" value="Formate_THF_ligase_CS"/>
</dbReference>
<dbReference type="InterPro" id="IPR027417">
    <property type="entry name" value="P-loop_NTPase"/>
</dbReference>
<dbReference type="NCBIfam" id="NF010030">
    <property type="entry name" value="PRK13505.1"/>
    <property type="match status" value="1"/>
</dbReference>
<dbReference type="Pfam" id="PF01268">
    <property type="entry name" value="FTHFS"/>
    <property type="match status" value="1"/>
</dbReference>
<dbReference type="SUPFAM" id="SSF52540">
    <property type="entry name" value="P-loop containing nucleoside triphosphate hydrolases"/>
    <property type="match status" value="1"/>
</dbReference>
<dbReference type="PROSITE" id="PS00721">
    <property type="entry name" value="FTHFS_1"/>
    <property type="match status" value="1"/>
</dbReference>
<dbReference type="PROSITE" id="PS00722">
    <property type="entry name" value="FTHFS_2"/>
    <property type="match status" value="1"/>
</dbReference>
<feature type="chain" id="PRO_0000199400" description="Formate--tetrahydrofolate ligase">
    <location>
        <begin position="1"/>
        <end position="556"/>
    </location>
</feature>
<feature type="binding site" evidence="1">
    <location>
        <begin position="65"/>
        <end position="72"/>
    </location>
    <ligand>
        <name>ATP</name>
        <dbReference type="ChEBI" id="CHEBI:30616"/>
    </ligand>
</feature>
<comment type="catalytic activity">
    <reaction evidence="1">
        <text>(6S)-5,6,7,8-tetrahydrofolate + formate + ATP = (6R)-10-formyltetrahydrofolate + ADP + phosphate</text>
        <dbReference type="Rhea" id="RHEA:20221"/>
        <dbReference type="ChEBI" id="CHEBI:15740"/>
        <dbReference type="ChEBI" id="CHEBI:30616"/>
        <dbReference type="ChEBI" id="CHEBI:43474"/>
        <dbReference type="ChEBI" id="CHEBI:57453"/>
        <dbReference type="ChEBI" id="CHEBI:195366"/>
        <dbReference type="ChEBI" id="CHEBI:456216"/>
        <dbReference type="EC" id="6.3.4.3"/>
    </reaction>
</comment>
<comment type="pathway">
    <text evidence="1">One-carbon metabolism; tetrahydrofolate interconversion.</text>
</comment>
<comment type="similarity">
    <text evidence="1">Belongs to the formate--tetrahydrofolate ligase family.</text>
</comment>
<protein>
    <recommendedName>
        <fullName evidence="1">Formate--tetrahydrofolate ligase</fullName>
        <ecNumber evidence="1">6.3.4.3</ecNumber>
    </recommendedName>
    <alternativeName>
        <fullName evidence="1">Formyltetrahydrofolate synthetase</fullName>
        <shortName evidence="1">FHS</shortName>
        <shortName evidence="1">FTHFS</shortName>
    </alternativeName>
</protein>
<organism>
    <name type="scientific">Streptococcus thermophilus (strain CNRZ 1066)</name>
    <dbReference type="NCBI Taxonomy" id="299768"/>
    <lineage>
        <taxon>Bacteria</taxon>
        <taxon>Bacillati</taxon>
        <taxon>Bacillota</taxon>
        <taxon>Bacilli</taxon>
        <taxon>Lactobacillales</taxon>
        <taxon>Streptococcaceae</taxon>
        <taxon>Streptococcus</taxon>
    </lineage>
</organism>
<name>FTHS_STRT1</name>
<sequence>MKTDIEIAQSVELKPITEVVEKVGIGFDDLELYGKYKAKLSFDKINEVKDDKPGKLILVTAINPTPAGEGKSTMSIGLADALNKIGKKTMIALREPSLGPVMGIKGGAAGGGYAQVLPMEDINLHFTGDMHAITTANNALSALLDNHIHQGNALGIDQRRIIWKRVVDLNDRALRHVTVGLGGPLNGIPREDGFDITVASEIMAILCLATDINDLKERLANIVVAYRYDRTPVYVRDLEIEGALTLILKDAIKPNLVQTIYGTPALVHGGPFANIAHGCNSVLATSTALRLADYTVTEAGFGADLGAEKFLDIKTPNLPTTPDAVVIVATLRALKMHGGVAKTDLSEENVQAVRDGFSNLKRHVENIRKFGIPVVVAINEFVADTEAEIAALKELCSEIKVPVELASVWANGADGGIDLANTVVDVVENGNADYKRLYSDDDSLEEKITKIVTEIYGGKSVVFEKKAKNQLKQFAEFGWDKLPVCMAKTQYSFSDNQFLLGAPEGFDITIREFVPKTGAGFIVALTGDVMTMPGLPKAPAALKMDVTEDGTAVGLF</sequence>
<gene>
    <name evidence="1" type="primary">fhs</name>
    <name type="ordered locus">str0791</name>
</gene>
<reference key="1">
    <citation type="journal article" date="2004" name="Nat. Biotechnol.">
        <title>Complete sequence and comparative genome analysis of the dairy bacterium Streptococcus thermophilus.</title>
        <authorList>
            <person name="Bolotin A."/>
            <person name="Quinquis B."/>
            <person name="Renault P."/>
            <person name="Sorokin A."/>
            <person name="Ehrlich S.D."/>
            <person name="Kulakauskas S."/>
            <person name="Lapidus A."/>
            <person name="Goltsman E."/>
            <person name="Mazur M."/>
            <person name="Pusch G.D."/>
            <person name="Fonstein M."/>
            <person name="Overbeek R."/>
            <person name="Kyprides N."/>
            <person name="Purnelle B."/>
            <person name="Prozzi D."/>
            <person name="Ngui K."/>
            <person name="Masuy D."/>
            <person name="Hancy F."/>
            <person name="Burteau S."/>
            <person name="Boutry M."/>
            <person name="Delcour J."/>
            <person name="Goffeau A."/>
            <person name="Hols P."/>
        </authorList>
    </citation>
    <scope>NUCLEOTIDE SEQUENCE [LARGE SCALE GENOMIC DNA]</scope>
    <source>
        <strain>CNRZ 1066</strain>
    </source>
</reference>
<keyword id="KW-0067">ATP-binding</keyword>
<keyword id="KW-0436">Ligase</keyword>
<keyword id="KW-0547">Nucleotide-binding</keyword>
<keyword id="KW-0554">One-carbon metabolism</keyword>